<name>CAND8_ARATH</name>
<dbReference type="EMBL" id="AF007271">
    <property type="protein sequence ID" value="AAB61079.1"/>
    <property type="status" value="ALT_SEQ"/>
    <property type="molecule type" value="Genomic_DNA"/>
</dbReference>
<dbReference type="EMBL" id="CP002688">
    <property type="protein sequence ID" value="AED93658.1"/>
    <property type="molecule type" value="Genomic_DNA"/>
</dbReference>
<dbReference type="EMBL" id="AY039860">
    <property type="protein sequence ID" value="AAK63964.1"/>
    <property type="status" value="ALT_FRAME"/>
    <property type="molecule type" value="mRNA"/>
</dbReference>
<dbReference type="EMBL" id="AY088841">
    <property type="protein sequence ID" value="AAM67148.1"/>
    <property type="molecule type" value="mRNA"/>
</dbReference>
<dbReference type="PIR" id="T01800">
    <property type="entry name" value="T01800"/>
</dbReference>
<dbReference type="RefSeq" id="NP_198073.1">
    <property type="nucleotide sequence ID" value="NM_122603.2"/>
</dbReference>
<dbReference type="FunCoup" id="F4K2U8">
    <property type="interactions" value="1319"/>
</dbReference>
<dbReference type="IntAct" id="F4K2U8">
    <property type="interactions" value="38"/>
</dbReference>
<dbReference type="STRING" id="3702.F4K2U8"/>
<dbReference type="GlyCosmos" id="F4K2U8">
    <property type="glycosylation" value="1 site, No reported glycans"/>
</dbReference>
<dbReference type="GlyGen" id="F4K2U8">
    <property type="glycosylation" value="1 site"/>
</dbReference>
<dbReference type="iPTMnet" id="F4K2U8"/>
<dbReference type="PaxDb" id="3702-AT5G27210.1"/>
<dbReference type="EnsemblPlants" id="AT5G27210.1">
    <property type="protein sequence ID" value="AT5G27210.1"/>
    <property type="gene ID" value="AT5G27210"/>
</dbReference>
<dbReference type="GeneID" id="832779"/>
<dbReference type="Gramene" id="AT5G27210.1">
    <property type="protein sequence ID" value="AT5G27210.1"/>
    <property type="gene ID" value="AT5G27210"/>
</dbReference>
<dbReference type="KEGG" id="ath:AT5G27210"/>
<dbReference type="Araport" id="AT5G27210"/>
<dbReference type="TAIR" id="AT5G27210">
    <property type="gene designation" value="CAND8"/>
</dbReference>
<dbReference type="eggNOG" id="KOG4536">
    <property type="taxonomic scope" value="Eukaryota"/>
</dbReference>
<dbReference type="HOGENOM" id="CLU_078931_0_0_1"/>
<dbReference type="InParanoid" id="F4K2U8"/>
<dbReference type="OMA" id="YNSRWRE"/>
<dbReference type="OrthoDB" id="10027388at2759"/>
<dbReference type="PRO" id="PR:F4K2U8"/>
<dbReference type="Proteomes" id="UP000006548">
    <property type="component" value="Chromosome 5"/>
</dbReference>
<dbReference type="ExpressionAtlas" id="F4K2U8">
    <property type="expression patterns" value="baseline and differential"/>
</dbReference>
<dbReference type="GO" id="GO:0016020">
    <property type="term" value="C:membrane"/>
    <property type="evidence" value="ECO:0007669"/>
    <property type="project" value="UniProtKB-SubCell"/>
</dbReference>
<dbReference type="GO" id="GO:0004930">
    <property type="term" value="F:G protein-coupled receptor activity"/>
    <property type="evidence" value="ECO:0007669"/>
    <property type="project" value="UniProtKB-KW"/>
</dbReference>
<dbReference type="GO" id="GO:0007186">
    <property type="term" value="P:G protein-coupled receptor signaling pathway"/>
    <property type="evidence" value="ECO:0000314"/>
    <property type="project" value="UniProtKB"/>
</dbReference>
<dbReference type="InterPro" id="IPR018781">
    <property type="entry name" value="TPRA1/CAND2/CAND8"/>
</dbReference>
<dbReference type="PANTHER" id="PTHR15876:SF11">
    <property type="entry name" value="PROTEIN CANDIDATE G-PROTEIN COUPLED RECEPTOR 8"/>
    <property type="match status" value="1"/>
</dbReference>
<dbReference type="PANTHER" id="PTHR15876">
    <property type="entry name" value="TRANSMEMBRANE PROTEIN ADIPOCYTE-ASSOCIATED 1"/>
    <property type="match status" value="1"/>
</dbReference>
<dbReference type="Pfam" id="PF10160">
    <property type="entry name" value="Tmemb_40"/>
    <property type="match status" value="1"/>
</dbReference>
<sequence>MRVLDEIAESPFLISPLNPNSTANGYRWVDKCHGFLHNTVLVAASLFFVAYLAYEAKKSLSKLSNRRSYIMIAYYGCLWLVSLLNLAWCCLQGWECTPGKEVVWNLLTLFTTSGMLFLEVSLVAFLFQGNYASGAEALTRTFLISGFIVALDLLLKAIFLFGFGVPLFIDNNENGKTFKWGLWIIHKLLLTGVYGMVFLMYNSRWREKLPARPAFYNYIIIMFALYSLYLVASAFTANNAHFGFWLYGIMSVCYHALYLPLLYITFLADFFQEEDLNLENVYYSEMKDAGFFDSDWE</sequence>
<organism>
    <name type="scientific">Arabidopsis thaliana</name>
    <name type="common">Mouse-ear cress</name>
    <dbReference type="NCBI Taxonomy" id="3702"/>
    <lineage>
        <taxon>Eukaryota</taxon>
        <taxon>Viridiplantae</taxon>
        <taxon>Streptophyta</taxon>
        <taxon>Embryophyta</taxon>
        <taxon>Tracheophyta</taxon>
        <taxon>Spermatophyta</taxon>
        <taxon>Magnoliopsida</taxon>
        <taxon>eudicotyledons</taxon>
        <taxon>Gunneridae</taxon>
        <taxon>Pentapetalae</taxon>
        <taxon>rosids</taxon>
        <taxon>malvids</taxon>
        <taxon>Brassicales</taxon>
        <taxon>Brassicaceae</taxon>
        <taxon>Camelineae</taxon>
        <taxon>Arabidopsis</taxon>
    </lineage>
</organism>
<reference key="1">
    <citation type="journal article" date="2000" name="Nature">
        <title>Sequence and analysis of chromosome 5 of the plant Arabidopsis thaliana.</title>
        <authorList>
            <person name="Tabata S."/>
            <person name="Kaneko T."/>
            <person name="Nakamura Y."/>
            <person name="Kotani H."/>
            <person name="Kato T."/>
            <person name="Asamizu E."/>
            <person name="Miyajima N."/>
            <person name="Sasamoto S."/>
            <person name="Kimura T."/>
            <person name="Hosouchi T."/>
            <person name="Kawashima K."/>
            <person name="Kohara M."/>
            <person name="Matsumoto M."/>
            <person name="Matsuno A."/>
            <person name="Muraki A."/>
            <person name="Nakayama S."/>
            <person name="Nakazaki N."/>
            <person name="Naruo K."/>
            <person name="Okumura S."/>
            <person name="Shinpo S."/>
            <person name="Takeuchi C."/>
            <person name="Wada T."/>
            <person name="Watanabe A."/>
            <person name="Yamada M."/>
            <person name="Yasuda M."/>
            <person name="Sato S."/>
            <person name="de la Bastide M."/>
            <person name="Huang E."/>
            <person name="Spiegel L."/>
            <person name="Gnoj L."/>
            <person name="O'Shaughnessy A."/>
            <person name="Preston R."/>
            <person name="Habermann K."/>
            <person name="Murray J."/>
            <person name="Johnson D."/>
            <person name="Rohlfing T."/>
            <person name="Nelson J."/>
            <person name="Stoneking T."/>
            <person name="Pepin K."/>
            <person name="Spieth J."/>
            <person name="Sekhon M."/>
            <person name="Armstrong J."/>
            <person name="Becker M."/>
            <person name="Belter E."/>
            <person name="Cordum H."/>
            <person name="Cordes M."/>
            <person name="Courtney L."/>
            <person name="Courtney W."/>
            <person name="Dante M."/>
            <person name="Du H."/>
            <person name="Edwards J."/>
            <person name="Fryman J."/>
            <person name="Haakensen B."/>
            <person name="Lamar E."/>
            <person name="Latreille P."/>
            <person name="Leonard S."/>
            <person name="Meyer R."/>
            <person name="Mulvaney E."/>
            <person name="Ozersky P."/>
            <person name="Riley A."/>
            <person name="Strowmatt C."/>
            <person name="Wagner-McPherson C."/>
            <person name="Wollam A."/>
            <person name="Yoakum M."/>
            <person name="Bell M."/>
            <person name="Dedhia N."/>
            <person name="Parnell L."/>
            <person name="Shah R."/>
            <person name="Rodriguez M."/>
            <person name="Hoon See L."/>
            <person name="Vil D."/>
            <person name="Baker J."/>
            <person name="Kirchoff K."/>
            <person name="Toth K."/>
            <person name="King L."/>
            <person name="Bahret A."/>
            <person name="Miller B."/>
            <person name="Marra M.A."/>
            <person name="Martienssen R."/>
            <person name="McCombie W.R."/>
            <person name="Wilson R.K."/>
            <person name="Murphy G."/>
            <person name="Bancroft I."/>
            <person name="Volckaert G."/>
            <person name="Wambutt R."/>
            <person name="Duesterhoeft A."/>
            <person name="Stiekema W."/>
            <person name="Pohl T."/>
            <person name="Entian K.-D."/>
            <person name="Terryn N."/>
            <person name="Hartley N."/>
            <person name="Bent E."/>
            <person name="Johnson S."/>
            <person name="Langham S.-A."/>
            <person name="McCullagh B."/>
            <person name="Robben J."/>
            <person name="Grymonprez B."/>
            <person name="Zimmermann W."/>
            <person name="Ramsperger U."/>
            <person name="Wedler H."/>
            <person name="Balke K."/>
            <person name="Wedler E."/>
            <person name="Peters S."/>
            <person name="van Staveren M."/>
            <person name="Dirkse W."/>
            <person name="Mooijman P."/>
            <person name="Klein Lankhorst R."/>
            <person name="Weitzenegger T."/>
            <person name="Bothe G."/>
            <person name="Rose M."/>
            <person name="Hauf J."/>
            <person name="Berneiser S."/>
            <person name="Hempel S."/>
            <person name="Feldpausch M."/>
            <person name="Lamberth S."/>
            <person name="Villarroel R."/>
            <person name="Gielen J."/>
            <person name="Ardiles W."/>
            <person name="Bents O."/>
            <person name="Lemcke K."/>
            <person name="Kolesov G."/>
            <person name="Mayer K.F.X."/>
            <person name="Rudd S."/>
            <person name="Schoof H."/>
            <person name="Schueller C."/>
            <person name="Zaccaria P."/>
            <person name="Mewes H.-W."/>
            <person name="Bevan M."/>
            <person name="Fransz P.F."/>
        </authorList>
    </citation>
    <scope>NUCLEOTIDE SEQUENCE [LARGE SCALE GENOMIC DNA]</scope>
    <source>
        <strain>cv. Columbia</strain>
    </source>
</reference>
<reference key="2">
    <citation type="journal article" date="2017" name="Plant J.">
        <title>Araport11: a complete reannotation of the Arabidopsis thaliana reference genome.</title>
        <authorList>
            <person name="Cheng C.Y."/>
            <person name="Krishnakumar V."/>
            <person name="Chan A.P."/>
            <person name="Thibaud-Nissen F."/>
            <person name="Schobel S."/>
            <person name="Town C.D."/>
        </authorList>
    </citation>
    <scope>GENOME REANNOTATION</scope>
    <source>
        <strain>cv. Columbia</strain>
    </source>
</reference>
<reference key="3">
    <citation type="journal article" date="2003" name="Science">
        <title>Empirical analysis of transcriptional activity in the Arabidopsis genome.</title>
        <authorList>
            <person name="Yamada K."/>
            <person name="Lim J."/>
            <person name="Dale J.M."/>
            <person name="Chen H."/>
            <person name="Shinn P."/>
            <person name="Palm C.J."/>
            <person name="Southwick A.M."/>
            <person name="Wu H.C."/>
            <person name="Kim C.J."/>
            <person name="Nguyen M."/>
            <person name="Pham P.K."/>
            <person name="Cheuk R.F."/>
            <person name="Karlin-Newmann G."/>
            <person name="Liu S.X."/>
            <person name="Lam B."/>
            <person name="Sakano H."/>
            <person name="Wu T."/>
            <person name="Yu G."/>
            <person name="Miranda M."/>
            <person name="Quach H.L."/>
            <person name="Tripp M."/>
            <person name="Chang C.H."/>
            <person name="Lee J.M."/>
            <person name="Toriumi M.J."/>
            <person name="Chan M.M."/>
            <person name="Tang C.C."/>
            <person name="Onodera C.S."/>
            <person name="Deng J.M."/>
            <person name="Akiyama K."/>
            <person name="Ansari Y."/>
            <person name="Arakawa T."/>
            <person name="Banh J."/>
            <person name="Banno F."/>
            <person name="Bowser L."/>
            <person name="Brooks S.Y."/>
            <person name="Carninci P."/>
            <person name="Chao Q."/>
            <person name="Choy N."/>
            <person name="Enju A."/>
            <person name="Goldsmith A.D."/>
            <person name="Gurjal M."/>
            <person name="Hansen N.F."/>
            <person name="Hayashizaki Y."/>
            <person name="Johnson-Hopson C."/>
            <person name="Hsuan V.W."/>
            <person name="Iida K."/>
            <person name="Karnes M."/>
            <person name="Khan S."/>
            <person name="Koesema E."/>
            <person name="Ishida J."/>
            <person name="Jiang P.X."/>
            <person name="Jones T."/>
            <person name="Kawai J."/>
            <person name="Kamiya A."/>
            <person name="Meyers C."/>
            <person name="Nakajima M."/>
            <person name="Narusaka M."/>
            <person name="Seki M."/>
            <person name="Sakurai T."/>
            <person name="Satou M."/>
            <person name="Tamse R."/>
            <person name="Vaysberg M."/>
            <person name="Wallender E.K."/>
            <person name="Wong C."/>
            <person name="Yamamura Y."/>
            <person name="Yuan S."/>
            <person name="Shinozaki K."/>
            <person name="Davis R.W."/>
            <person name="Theologis A."/>
            <person name="Ecker J.R."/>
        </authorList>
    </citation>
    <scope>NUCLEOTIDE SEQUENCE [LARGE SCALE MRNA]</scope>
    <source>
        <strain>cv. Columbia</strain>
    </source>
</reference>
<reference key="4">
    <citation type="submission" date="2002-03" db="EMBL/GenBank/DDBJ databases">
        <title>Full-length cDNA from Arabidopsis thaliana.</title>
        <authorList>
            <person name="Brover V.V."/>
            <person name="Troukhan M.E."/>
            <person name="Alexandrov N.A."/>
            <person name="Lu Y.-P."/>
            <person name="Flavell R.B."/>
            <person name="Feldmann K.A."/>
        </authorList>
    </citation>
    <scope>NUCLEOTIDE SEQUENCE [LARGE SCALE MRNA]</scope>
</reference>
<reference key="5">
    <citation type="journal article" date="2006" name="Genome Biol.">
        <title>Mining the Arabidopsis thaliana genome for highly-divergent seven transmembrane receptors.</title>
        <authorList>
            <person name="Moriyama E.N."/>
            <person name="Strope P.K."/>
            <person name="Opiyo S.O."/>
            <person name="Chen Z."/>
            <person name="Jones A.M."/>
        </authorList>
    </citation>
    <scope>GENE FAMILY</scope>
</reference>
<reference key="6">
    <citation type="journal article" date="2008" name="Genome Biol.">
        <title>Whole proteome identification of plant candidate G-protein coupled receptors in Arabidopsis, rice, and poplar: computational prediction and in-vivo protein coupling.</title>
        <authorList>
            <person name="Gookin T.E."/>
            <person name="Kim J."/>
            <person name="Assmann S.M."/>
        </authorList>
    </citation>
    <scope>FUNCTION</scope>
    <scope>GENE FAMILY</scope>
    <scope>NOMENCLATURE</scope>
</reference>
<protein>
    <recommendedName>
        <fullName evidence="5">Protein CANDIDATE G-PROTEIN COUPLED RECEPTOR 8</fullName>
        <shortName evidence="5">AtCand8</shortName>
    </recommendedName>
</protein>
<gene>
    <name evidence="5" type="primary">CAND8</name>
    <name evidence="7" type="ordered locus">At5g27210</name>
    <name evidence="8" type="ORF">T21B4.120</name>
</gene>
<keyword id="KW-0297">G-protein coupled receptor</keyword>
<keyword id="KW-0325">Glycoprotein</keyword>
<keyword id="KW-0472">Membrane</keyword>
<keyword id="KW-0675">Receptor</keyword>
<keyword id="KW-1185">Reference proteome</keyword>
<keyword id="KW-0807">Transducer</keyword>
<keyword id="KW-0812">Transmembrane</keyword>
<keyword id="KW-1133">Transmembrane helix</keyword>
<feature type="chain" id="PRO_0000447636" description="Protein CANDIDATE G-PROTEIN COUPLED RECEPTOR 8">
    <location>
        <begin position="1"/>
        <end position="297"/>
    </location>
</feature>
<feature type="transmembrane region" description="Helical; Name=1" evidence="2">
    <location>
        <begin position="34"/>
        <end position="54"/>
    </location>
</feature>
<feature type="transmembrane region" description="Helical; Name=2" evidence="2">
    <location>
        <begin position="70"/>
        <end position="90"/>
    </location>
</feature>
<feature type="transmembrane region" description="Helical; Name=3" evidence="2">
    <location>
        <begin position="107"/>
        <end position="127"/>
    </location>
</feature>
<feature type="transmembrane region" description="Helical; Name=4" evidence="2">
    <location>
        <begin position="142"/>
        <end position="162"/>
    </location>
</feature>
<feature type="transmembrane region" description="Helical; Name=5" evidence="2">
    <location>
        <begin position="180"/>
        <end position="200"/>
    </location>
</feature>
<feature type="transmembrane region" description="Helical; Name=6" evidence="2">
    <location>
        <begin position="215"/>
        <end position="235"/>
    </location>
</feature>
<feature type="transmembrane region" description="Helical; Name=7" evidence="2">
    <location>
        <begin position="242"/>
        <end position="262"/>
    </location>
</feature>
<feature type="glycosylation site" description="N-linked (GlcNAc...) asparagine" evidence="3">
    <location>
        <position position="20"/>
    </location>
</feature>
<feature type="sequence conflict" description="In Ref. 4; AAM67148." evidence="6" ref="4">
    <original>G</original>
    <variation>W</variation>
    <location>
        <position position="99"/>
    </location>
</feature>
<evidence type="ECO:0000250" key="1">
    <source>
        <dbReference type="UniProtKB" id="Q94AH1"/>
    </source>
</evidence>
<evidence type="ECO:0000255" key="2"/>
<evidence type="ECO:0000255" key="3">
    <source>
        <dbReference type="PROSITE-ProRule" id="PRU00498"/>
    </source>
</evidence>
<evidence type="ECO:0000269" key="4">
    <source>
    </source>
</evidence>
<evidence type="ECO:0000303" key="5">
    <source>
    </source>
</evidence>
<evidence type="ECO:0000305" key="6"/>
<evidence type="ECO:0000312" key="7">
    <source>
        <dbReference type="Araport" id="AT5G27210"/>
    </source>
</evidence>
<evidence type="ECO:0000312" key="8">
    <source>
        <dbReference type="EMBL" id="AAB61079.1"/>
    </source>
</evidence>
<comment type="function">
    <text evidence="1 4">G-protein coupled receptor (PubMed:18671868). Plays a role in plants and microbes interactions (By similarity).</text>
</comment>
<comment type="subcellular location">
    <subcellularLocation>
        <location evidence="2">Membrane</location>
        <topology evidence="2">Multi-pass membrane protein</topology>
    </subcellularLocation>
</comment>
<comment type="similarity">
    <text evidence="6">Belongs to the UPF0359 family.</text>
</comment>
<comment type="sequence caution" evidence="6">
    <conflict type="erroneous gene model prediction">
        <sequence resource="EMBL-CDS" id="AAB61079"/>
    </conflict>
</comment>
<comment type="sequence caution" evidence="6">
    <conflict type="frameshift">
        <sequence resource="EMBL-CDS" id="AAK63964"/>
    </conflict>
</comment>
<accession>F4K2U8</accession>
<accession>O04651</accession>
<accession>Q8L8S4</accession>
<accession>Q94BV6</accession>
<proteinExistence type="evidence at transcript level"/>